<organism>
    <name type="scientific">Yersinia pestis</name>
    <dbReference type="NCBI Taxonomy" id="632"/>
    <lineage>
        <taxon>Bacteria</taxon>
        <taxon>Pseudomonadati</taxon>
        <taxon>Pseudomonadota</taxon>
        <taxon>Gammaproteobacteria</taxon>
        <taxon>Enterobacterales</taxon>
        <taxon>Yersiniaceae</taxon>
        <taxon>Yersinia</taxon>
    </lineage>
</organism>
<feature type="initiator methionine" description="Removed" evidence="1">
    <location>
        <position position="1"/>
    </location>
</feature>
<feature type="chain" id="PRO_0000147407" description="Universal stress protein A">
    <location>
        <begin position="2"/>
        <end position="148"/>
    </location>
</feature>
<evidence type="ECO:0000250" key="1"/>
<evidence type="ECO:0000305" key="2"/>
<gene>
    <name type="primary">uspA</name>
    <name type="ordered locus">YPO3970</name>
    <name type="ordered locus">y3859</name>
    <name type="ordered locus">YP_3333</name>
</gene>
<name>USPA_YERPE</name>
<proteinExistence type="inferred from homology"/>
<sequence length="148" mass="16439">MAYKHILIAVDLSPESKVLVEKAVSMAKPYNAKVSLIHVDVNYSDLYTGLIDVNLGDMQKRISEETHNALTELSQNAGYPVEQTLSGSGDLGQVLVDAIKKYDIDLVLCGHHQDFWSKLMSSARQLINTVHVDMLIVPLRDDENGEDD</sequence>
<protein>
    <recommendedName>
        <fullName>Universal stress protein A</fullName>
    </recommendedName>
</protein>
<dbReference type="EMBL" id="AL590842">
    <property type="protein sequence ID" value="CAL22551.1"/>
    <property type="molecule type" value="Genomic_DNA"/>
</dbReference>
<dbReference type="EMBL" id="AE009952">
    <property type="protein sequence ID" value="AAM87404.1"/>
    <property type="molecule type" value="Genomic_DNA"/>
</dbReference>
<dbReference type="EMBL" id="AE017042">
    <property type="protein sequence ID" value="AAS63498.1"/>
    <property type="molecule type" value="Genomic_DNA"/>
</dbReference>
<dbReference type="PIR" id="AD0483">
    <property type="entry name" value="AD0483"/>
</dbReference>
<dbReference type="RefSeq" id="WP_002209528.1">
    <property type="nucleotide sequence ID" value="NZ_WUCM01000026.1"/>
</dbReference>
<dbReference type="RefSeq" id="YP_002348841.1">
    <property type="nucleotide sequence ID" value="NC_003143.1"/>
</dbReference>
<dbReference type="SMR" id="Q8ZA49"/>
<dbReference type="STRING" id="214092.YPO3970"/>
<dbReference type="PaxDb" id="214092-YPO3970"/>
<dbReference type="DNASU" id="1148806"/>
<dbReference type="EnsemblBacteria" id="AAS63498">
    <property type="protein sequence ID" value="AAS63498"/>
    <property type="gene ID" value="YP_3333"/>
</dbReference>
<dbReference type="GeneID" id="57974736"/>
<dbReference type="KEGG" id="ype:YPO3970"/>
<dbReference type="KEGG" id="ypk:y3859"/>
<dbReference type="KEGG" id="ypm:YP_3333"/>
<dbReference type="PATRIC" id="fig|214092.21.peg.4501"/>
<dbReference type="eggNOG" id="COG0589">
    <property type="taxonomic scope" value="Bacteria"/>
</dbReference>
<dbReference type="HOGENOM" id="CLU_049301_18_0_6"/>
<dbReference type="OMA" id="MNTVPCD"/>
<dbReference type="OrthoDB" id="9792500at2"/>
<dbReference type="Proteomes" id="UP000000815">
    <property type="component" value="Chromosome"/>
</dbReference>
<dbReference type="Proteomes" id="UP000001019">
    <property type="component" value="Chromosome"/>
</dbReference>
<dbReference type="Proteomes" id="UP000002490">
    <property type="component" value="Chromosome"/>
</dbReference>
<dbReference type="GO" id="GO:0005737">
    <property type="term" value="C:cytoplasm"/>
    <property type="evidence" value="ECO:0007669"/>
    <property type="project" value="UniProtKB-SubCell"/>
</dbReference>
<dbReference type="GO" id="GO:0006950">
    <property type="term" value="P:response to stress"/>
    <property type="evidence" value="ECO:0000318"/>
    <property type="project" value="GO_Central"/>
</dbReference>
<dbReference type="CDD" id="cd23657">
    <property type="entry name" value="USP-A-like"/>
    <property type="match status" value="1"/>
</dbReference>
<dbReference type="FunFam" id="3.40.50.620:FF:000014">
    <property type="entry name" value="Universal stress protein"/>
    <property type="match status" value="1"/>
</dbReference>
<dbReference type="Gene3D" id="3.40.50.620">
    <property type="entry name" value="HUPs"/>
    <property type="match status" value="1"/>
</dbReference>
<dbReference type="InterPro" id="IPR014729">
    <property type="entry name" value="Rossmann-like_a/b/a_fold"/>
</dbReference>
<dbReference type="InterPro" id="IPR006015">
    <property type="entry name" value="Universal_stress_UspA"/>
</dbReference>
<dbReference type="InterPro" id="IPR006016">
    <property type="entry name" value="UspA"/>
</dbReference>
<dbReference type="NCBIfam" id="NF011698">
    <property type="entry name" value="PRK15118.1"/>
    <property type="match status" value="1"/>
</dbReference>
<dbReference type="PANTHER" id="PTHR46268">
    <property type="entry name" value="STRESS RESPONSE PROTEIN NHAX"/>
    <property type="match status" value="1"/>
</dbReference>
<dbReference type="PANTHER" id="PTHR46268:SF23">
    <property type="entry name" value="UNIVERSAL STRESS PROTEIN A-RELATED"/>
    <property type="match status" value="1"/>
</dbReference>
<dbReference type="Pfam" id="PF00582">
    <property type="entry name" value="Usp"/>
    <property type="match status" value="1"/>
</dbReference>
<dbReference type="PIRSF" id="PIRSF006276">
    <property type="entry name" value="UspA"/>
    <property type="match status" value="1"/>
</dbReference>
<dbReference type="SUPFAM" id="SSF52402">
    <property type="entry name" value="Adenine nucleotide alpha hydrolases-like"/>
    <property type="match status" value="1"/>
</dbReference>
<keyword id="KW-0963">Cytoplasm</keyword>
<keyword id="KW-1185">Reference proteome</keyword>
<reference key="1">
    <citation type="journal article" date="2001" name="Nature">
        <title>Genome sequence of Yersinia pestis, the causative agent of plague.</title>
        <authorList>
            <person name="Parkhill J."/>
            <person name="Wren B.W."/>
            <person name="Thomson N.R."/>
            <person name="Titball R.W."/>
            <person name="Holden M.T.G."/>
            <person name="Prentice M.B."/>
            <person name="Sebaihia M."/>
            <person name="James K.D."/>
            <person name="Churcher C.M."/>
            <person name="Mungall K.L."/>
            <person name="Baker S."/>
            <person name="Basham D."/>
            <person name="Bentley S.D."/>
            <person name="Brooks K."/>
            <person name="Cerdeno-Tarraga A.-M."/>
            <person name="Chillingworth T."/>
            <person name="Cronin A."/>
            <person name="Davies R.M."/>
            <person name="Davis P."/>
            <person name="Dougan G."/>
            <person name="Feltwell T."/>
            <person name="Hamlin N."/>
            <person name="Holroyd S."/>
            <person name="Jagels K."/>
            <person name="Karlyshev A.V."/>
            <person name="Leather S."/>
            <person name="Moule S."/>
            <person name="Oyston P.C.F."/>
            <person name="Quail M.A."/>
            <person name="Rutherford K.M."/>
            <person name="Simmonds M."/>
            <person name="Skelton J."/>
            <person name="Stevens K."/>
            <person name="Whitehead S."/>
            <person name="Barrell B.G."/>
        </authorList>
    </citation>
    <scope>NUCLEOTIDE SEQUENCE [LARGE SCALE GENOMIC DNA]</scope>
    <source>
        <strain>CO-92 / Biovar Orientalis</strain>
    </source>
</reference>
<reference key="2">
    <citation type="journal article" date="2002" name="J. Bacteriol.">
        <title>Genome sequence of Yersinia pestis KIM.</title>
        <authorList>
            <person name="Deng W."/>
            <person name="Burland V."/>
            <person name="Plunkett G. III"/>
            <person name="Boutin A."/>
            <person name="Mayhew G.F."/>
            <person name="Liss P."/>
            <person name="Perna N.T."/>
            <person name="Rose D.J."/>
            <person name="Mau B."/>
            <person name="Zhou S."/>
            <person name="Schwartz D.C."/>
            <person name="Fetherston J.D."/>
            <person name="Lindler L.E."/>
            <person name="Brubaker R.R."/>
            <person name="Plano G.V."/>
            <person name="Straley S.C."/>
            <person name="McDonough K.A."/>
            <person name="Nilles M.L."/>
            <person name="Matson J.S."/>
            <person name="Blattner F.R."/>
            <person name="Perry R.D."/>
        </authorList>
    </citation>
    <scope>NUCLEOTIDE SEQUENCE [LARGE SCALE GENOMIC DNA]</scope>
    <source>
        <strain>KIM10+ / Biovar Mediaevalis</strain>
    </source>
</reference>
<reference key="3">
    <citation type="journal article" date="2004" name="DNA Res.">
        <title>Complete genome sequence of Yersinia pestis strain 91001, an isolate avirulent to humans.</title>
        <authorList>
            <person name="Song Y."/>
            <person name="Tong Z."/>
            <person name="Wang J."/>
            <person name="Wang L."/>
            <person name="Guo Z."/>
            <person name="Han Y."/>
            <person name="Zhang J."/>
            <person name="Pei D."/>
            <person name="Zhou D."/>
            <person name="Qin H."/>
            <person name="Pang X."/>
            <person name="Han Y."/>
            <person name="Zhai J."/>
            <person name="Li M."/>
            <person name="Cui B."/>
            <person name="Qi Z."/>
            <person name="Jin L."/>
            <person name="Dai R."/>
            <person name="Chen F."/>
            <person name="Li S."/>
            <person name="Ye C."/>
            <person name="Du Z."/>
            <person name="Lin W."/>
            <person name="Wang J."/>
            <person name="Yu J."/>
            <person name="Yang H."/>
            <person name="Wang J."/>
            <person name="Huang P."/>
            <person name="Yang R."/>
        </authorList>
    </citation>
    <scope>NUCLEOTIDE SEQUENCE [LARGE SCALE GENOMIC DNA]</scope>
    <source>
        <strain>91001 / Biovar Mediaevalis</strain>
    </source>
</reference>
<comment type="function">
    <text evidence="1">Required for resistance to DNA-damaging agents.</text>
</comment>
<comment type="subunit">
    <text evidence="1">Homodimer.</text>
</comment>
<comment type="subcellular location">
    <subcellularLocation>
        <location evidence="1">Cytoplasm</location>
    </subcellularLocation>
</comment>
<comment type="similarity">
    <text evidence="2">Belongs to the universal stress protein A family.</text>
</comment>
<accession>Q8ZA49</accession>
<accession>Q0WA47</accession>